<sequence>MFQRKTLQRRNLKGLNLNLHPDVGNNGQLQEKTETHQGQSRIEGHVMSNINAIQNNSNLFLRRGIKKKLTLDAFGDDQAISKPNTVVIQQPQNEPVLVLSSLSQSPCVSSSSSLSTPCIIDAYSNNFGLSPSSTNSTPSTIQGLSNIATPVENEHSISLPPLEESLSPAAADLKDTLSGTSNGNYIQLQDLVQLGKIGAGNSGTVVKALHVPDSKIVAKKTIPVEQNNSTIINQLVRELSIVKNVKPHENIITFYGAYYNQHINNEIIILMEYSDCGSLDKILSVYKRFVQRGTVSSKKTWFNELTISKIAYGVLNGLDHLYRQYKIIHRDIKPSNVLINSKGQIKLCDFGVSKKLINSIADTFVGTSTYMSPERIQGNVYSIKGDVWSLGLMIIELVTGEFPLGGHNDTPDGILDLLQRIVNEPSPRLPKDRIYSKEMTDFVNRCCIKNERERSSIHELLHHDLIMKYVSPSKDDKFRHWCRKIKSKIKEDKRIKREALDRAKLEKKQSERSTH</sequence>
<proteinExistence type="evidence at protein level"/>
<name>STE7_YEAST</name>
<dbReference type="EC" id="2.7.12.2"/>
<dbReference type="EMBL" id="M14097">
    <property type="protein sequence ID" value="AAA35118.1"/>
    <property type="molecule type" value="Genomic_DNA"/>
</dbReference>
<dbReference type="EMBL" id="Z67750">
    <property type="protein sequence ID" value="CAA91587.1"/>
    <property type="molecule type" value="Genomic_DNA"/>
</dbReference>
<dbReference type="EMBL" id="Z74207">
    <property type="protein sequence ID" value="CAA98732.1"/>
    <property type="molecule type" value="Genomic_DNA"/>
</dbReference>
<dbReference type="EMBL" id="X97751">
    <property type="protein sequence ID" value="CAA66332.1"/>
    <property type="molecule type" value="Genomic_DNA"/>
</dbReference>
<dbReference type="EMBL" id="BK006938">
    <property type="protein sequence ID" value="DAA11702.1"/>
    <property type="molecule type" value="Genomic_DNA"/>
</dbReference>
<dbReference type="PIR" id="A25048">
    <property type="entry name" value="A25048"/>
</dbReference>
<dbReference type="RefSeq" id="NP_010122.1">
    <property type="nucleotide sequence ID" value="NM_001180219.1"/>
</dbReference>
<dbReference type="SMR" id="P06784"/>
<dbReference type="BioGRID" id="31905">
    <property type="interactions" value="64"/>
</dbReference>
<dbReference type="DIP" id="DIP-9N"/>
<dbReference type="ELM" id="P06784"/>
<dbReference type="FunCoup" id="P06784">
    <property type="interactions" value="702"/>
</dbReference>
<dbReference type="IntAct" id="P06784">
    <property type="interactions" value="27"/>
</dbReference>
<dbReference type="MINT" id="P06784"/>
<dbReference type="STRING" id="4932.YDL159W"/>
<dbReference type="GlyGen" id="P06784">
    <property type="glycosylation" value="1 site"/>
</dbReference>
<dbReference type="iPTMnet" id="P06784"/>
<dbReference type="PaxDb" id="4932-YDL159W"/>
<dbReference type="PeptideAtlas" id="P06784"/>
<dbReference type="EnsemblFungi" id="YDL159W_mRNA">
    <property type="protein sequence ID" value="YDL159W"/>
    <property type="gene ID" value="YDL159W"/>
</dbReference>
<dbReference type="GeneID" id="851396"/>
<dbReference type="KEGG" id="sce:YDL159W"/>
<dbReference type="AGR" id="SGD:S000002318"/>
<dbReference type="SGD" id="S000002318">
    <property type="gene designation" value="STE7"/>
</dbReference>
<dbReference type="VEuPathDB" id="FungiDB:YDL159W"/>
<dbReference type="eggNOG" id="KOG0581">
    <property type="taxonomic scope" value="Eukaryota"/>
</dbReference>
<dbReference type="HOGENOM" id="CLU_000288_63_23_1"/>
<dbReference type="InParanoid" id="P06784"/>
<dbReference type="OMA" id="EFRHWCK"/>
<dbReference type="OrthoDB" id="10252354at2759"/>
<dbReference type="BioCyc" id="YEAST:G3O-29553-MONOMER"/>
<dbReference type="BRENDA" id="2.7.12.2">
    <property type="organism ID" value="984"/>
</dbReference>
<dbReference type="Reactome" id="R-SCE-110056">
    <property type="pathway name" value="MAPK3 (ERK1) activation"/>
</dbReference>
<dbReference type="Reactome" id="R-SCE-112411">
    <property type="pathway name" value="MAPK1 (ERK2) activation"/>
</dbReference>
<dbReference type="Reactome" id="R-SCE-445144">
    <property type="pathway name" value="Signal transduction by L1"/>
</dbReference>
<dbReference type="Reactome" id="R-SCE-5674135">
    <property type="pathway name" value="MAP2K and MAPK activation"/>
</dbReference>
<dbReference type="Reactome" id="R-SCE-5674499">
    <property type="pathway name" value="Negative feedback regulation of MAPK pathway"/>
</dbReference>
<dbReference type="BioGRID-ORCS" id="851396">
    <property type="hits" value="2 hits in 13 CRISPR screens"/>
</dbReference>
<dbReference type="PRO" id="PR:P06784"/>
<dbReference type="Proteomes" id="UP000002311">
    <property type="component" value="Chromosome IV"/>
</dbReference>
<dbReference type="RNAct" id="P06784">
    <property type="molecule type" value="protein"/>
</dbReference>
<dbReference type="GO" id="GO:0005737">
    <property type="term" value="C:cytoplasm"/>
    <property type="evidence" value="ECO:0000314"/>
    <property type="project" value="SGD"/>
</dbReference>
<dbReference type="GO" id="GO:0043332">
    <property type="term" value="C:mating projection tip"/>
    <property type="evidence" value="ECO:0000314"/>
    <property type="project" value="SGD"/>
</dbReference>
<dbReference type="GO" id="GO:0005524">
    <property type="term" value="F:ATP binding"/>
    <property type="evidence" value="ECO:0007669"/>
    <property type="project" value="UniProtKB-KW"/>
</dbReference>
<dbReference type="GO" id="GO:0004708">
    <property type="term" value="F:MAP kinase kinase activity"/>
    <property type="evidence" value="ECO:0000314"/>
    <property type="project" value="SGD"/>
</dbReference>
<dbReference type="GO" id="GO:0106310">
    <property type="term" value="F:protein serine kinase activity"/>
    <property type="evidence" value="ECO:0007669"/>
    <property type="project" value="RHEA"/>
</dbReference>
<dbReference type="GO" id="GO:0004674">
    <property type="term" value="F:protein serine/threonine kinase activity"/>
    <property type="evidence" value="ECO:0007669"/>
    <property type="project" value="UniProtKB-KW"/>
</dbReference>
<dbReference type="GO" id="GO:0004713">
    <property type="term" value="F:protein tyrosine kinase activity"/>
    <property type="evidence" value="ECO:0007669"/>
    <property type="project" value="RHEA"/>
</dbReference>
<dbReference type="GO" id="GO:0000196">
    <property type="term" value="P:cell integrity MAPK cascade"/>
    <property type="evidence" value="ECO:0000316"/>
    <property type="project" value="SGD"/>
</dbReference>
<dbReference type="GO" id="GO:0001403">
    <property type="term" value="P:invasive growth in response to glucose limitation"/>
    <property type="evidence" value="ECO:0000315"/>
    <property type="project" value="SGD"/>
</dbReference>
<dbReference type="GO" id="GO:0000165">
    <property type="term" value="P:MAPK cascade"/>
    <property type="evidence" value="ECO:0000318"/>
    <property type="project" value="GO_Central"/>
</dbReference>
<dbReference type="GO" id="GO:0071507">
    <property type="term" value="P:pheromone response MAPK cascade"/>
    <property type="evidence" value="ECO:0000314"/>
    <property type="project" value="SGD"/>
</dbReference>
<dbReference type="GO" id="GO:0000750">
    <property type="term" value="P:pheromone-dependent signal transduction involved in conjugation with cellular fusion"/>
    <property type="evidence" value="ECO:0000314"/>
    <property type="project" value="SGD"/>
</dbReference>
<dbReference type="GO" id="GO:0007124">
    <property type="term" value="P:pseudohyphal growth"/>
    <property type="evidence" value="ECO:0000315"/>
    <property type="project" value="SGD"/>
</dbReference>
<dbReference type="GO" id="GO:0000749">
    <property type="term" value="P:response to pheromone triggering conjugation with cellular fusion"/>
    <property type="evidence" value="ECO:0000314"/>
    <property type="project" value="SGD"/>
</dbReference>
<dbReference type="GO" id="GO:0001402">
    <property type="term" value="P:signal transduction involved in filamentous growth"/>
    <property type="evidence" value="ECO:0000315"/>
    <property type="project" value="SGD"/>
</dbReference>
<dbReference type="CDD" id="cd06620">
    <property type="entry name" value="PKc_Byr1_like"/>
    <property type="match status" value="1"/>
</dbReference>
<dbReference type="FunFam" id="1.10.510.10:FF:000921">
    <property type="entry name" value="Serine/threonine-protein kinase STE7"/>
    <property type="match status" value="1"/>
</dbReference>
<dbReference type="FunFam" id="3.30.200.20:FF:000784">
    <property type="entry name" value="Serine/threonine-protein kinase STE7"/>
    <property type="match status" value="1"/>
</dbReference>
<dbReference type="Gene3D" id="3.30.200.20">
    <property type="entry name" value="Phosphorylase Kinase, domain 1"/>
    <property type="match status" value="1"/>
</dbReference>
<dbReference type="Gene3D" id="1.10.510.10">
    <property type="entry name" value="Transferase(Phosphotransferase) domain 1"/>
    <property type="match status" value="1"/>
</dbReference>
<dbReference type="InterPro" id="IPR049613">
    <property type="entry name" value="Byr1-like_cat"/>
</dbReference>
<dbReference type="InterPro" id="IPR011009">
    <property type="entry name" value="Kinase-like_dom_sf"/>
</dbReference>
<dbReference type="InterPro" id="IPR000719">
    <property type="entry name" value="Prot_kinase_dom"/>
</dbReference>
<dbReference type="InterPro" id="IPR017441">
    <property type="entry name" value="Protein_kinase_ATP_BS"/>
</dbReference>
<dbReference type="InterPro" id="IPR008271">
    <property type="entry name" value="Ser/Thr_kinase_AS"/>
</dbReference>
<dbReference type="PANTHER" id="PTHR48013:SF9">
    <property type="entry name" value="DUAL SPECIFICITY MITOGEN-ACTIVATED PROTEIN KINASE KINASE 5"/>
    <property type="match status" value="1"/>
</dbReference>
<dbReference type="PANTHER" id="PTHR48013">
    <property type="entry name" value="DUAL SPECIFICITY MITOGEN-ACTIVATED PROTEIN KINASE KINASE 5-RELATED"/>
    <property type="match status" value="1"/>
</dbReference>
<dbReference type="Pfam" id="PF00069">
    <property type="entry name" value="Pkinase"/>
    <property type="match status" value="1"/>
</dbReference>
<dbReference type="SMART" id="SM00220">
    <property type="entry name" value="S_TKc"/>
    <property type="match status" value="1"/>
</dbReference>
<dbReference type="SUPFAM" id="SSF56112">
    <property type="entry name" value="Protein kinase-like (PK-like)"/>
    <property type="match status" value="1"/>
</dbReference>
<dbReference type="PROSITE" id="PS00107">
    <property type="entry name" value="PROTEIN_KINASE_ATP"/>
    <property type="match status" value="1"/>
</dbReference>
<dbReference type="PROSITE" id="PS50011">
    <property type="entry name" value="PROTEIN_KINASE_DOM"/>
    <property type="match status" value="1"/>
</dbReference>
<dbReference type="PROSITE" id="PS00108">
    <property type="entry name" value="PROTEIN_KINASE_ST"/>
    <property type="match status" value="1"/>
</dbReference>
<feature type="chain" id="PRO_0000086688" description="Serine/threonine-protein kinase STE7">
    <location>
        <begin position="1"/>
        <end position="515"/>
    </location>
</feature>
<feature type="domain" description="Protein kinase" evidence="1">
    <location>
        <begin position="191"/>
        <end position="466"/>
    </location>
</feature>
<feature type="active site" description="Proton acceptor" evidence="1 2">
    <location>
        <position position="331"/>
    </location>
</feature>
<feature type="binding site" evidence="1">
    <location>
        <begin position="197"/>
        <end position="205"/>
    </location>
    <ligand>
        <name>ATP</name>
        <dbReference type="ChEBI" id="CHEBI:30616"/>
    </ligand>
</feature>
<feature type="binding site" evidence="1">
    <location>
        <position position="220"/>
    </location>
    <ligand>
        <name>ATP</name>
        <dbReference type="ChEBI" id="CHEBI:30616"/>
    </ligand>
</feature>
<feature type="modified residue" description="Phosphoserine" evidence="4">
    <location>
        <position position="359"/>
    </location>
</feature>
<feature type="modified residue" description="Phosphothreonine" evidence="4">
    <location>
        <position position="363"/>
    </location>
</feature>
<feature type="mutagenesis site" description="No loss of activity." evidence="4">
    <original>S</original>
    <variation>A</variation>
    <location>
        <position position="353"/>
    </location>
</feature>
<feature type="mutagenesis site" description="Inactivation." evidence="4">
    <original>S</original>
    <variation>A</variation>
    <location>
        <position position="359"/>
    </location>
</feature>
<feature type="mutagenesis site" description="Inactivation." evidence="4">
    <original>T</original>
    <variation>A</variation>
    <location>
        <position position="363"/>
    </location>
</feature>
<keyword id="KW-0067">ATP-binding</keyword>
<keyword id="KW-0418">Kinase</keyword>
<keyword id="KW-0547">Nucleotide-binding</keyword>
<keyword id="KW-0589">Pheromone response</keyword>
<keyword id="KW-0597">Phosphoprotein</keyword>
<keyword id="KW-1185">Reference proteome</keyword>
<keyword id="KW-0723">Serine/threonine-protein kinase</keyword>
<keyword id="KW-0808">Transferase</keyword>
<comment type="function">
    <text>Serine/threonine protein kinase required for cell-type-specific transcription and signal transduction in yeast. It is thought that it is phosphorylated by the ste11 protein kinase and that it can phosphorylate the FUS3 and or KSS1 kinases.</text>
</comment>
<comment type="catalytic activity">
    <reaction>
        <text>L-seryl-[protein] + ATP = O-phospho-L-seryl-[protein] + ADP + H(+)</text>
        <dbReference type="Rhea" id="RHEA:17989"/>
        <dbReference type="Rhea" id="RHEA-COMP:9863"/>
        <dbReference type="Rhea" id="RHEA-COMP:11604"/>
        <dbReference type="ChEBI" id="CHEBI:15378"/>
        <dbReference type="ChEBI" id="CHEBI:29999"/>
        <dbReference type="ChEBI" id="CHEBI:30616"/>
        <dbReference type="ChEBI" id="CHEBI:83421"/>
        <dbReference type="ChEBI" id="CHEBI:456216"/>
        <dbReference type="EC" id="2.7.12.2"/>
    </reaction>
</comment>
<comment type="catalytic activity">
    <reaction>
        <text>L-threonyl-[protein] + ATP = O-phospho-L-threonyl-[protein] + ADP + H(+)</text>
        <dbReference type="Rhea" id="RHEA:46608"/>
        <dbReference type="Rhea" id="RHEA-COMP:11060"/>
        <dbReference type="Rhea" id="RHEA-COMP:11605"/>
        <dbReference type="ChEBI" id="CHEBI:15378"/>
        <dbReference type="ChEBI" id="CHEBI:30013"/>
        <dbReference type="ChEBI" id="CHEBI:30616"/>
        <dbReference type="ChEBI" id="CHEBI:61977"/>
        <dbReference type="ChEBI" id="CHEBI:456216"/>
        <dbReference type="EC" id="2.7.12.2"/>
    </reaction>
</comment>
<comment type="catalytic activity">
    <reaction>
        <text>L-tyrosyl-[protein] + ATP = O-phospho-L-tyrosyl-[protein] + ADP + H(+)</text>
        <dbReference type="Rhea" id="RHEA:10596"/>
        <dbReference type="Rhea" id="RHEA-COMP:10136"/>
        <dbReference type="Rhea" id="RHEA-COMP:20101"/>
        <dbReference type="ChEBI" id="CHEBI:15378"/>
        <dbReference type="ChEBI" id="CHEBI:30616"/>
        <dbReference type="ChEBI" id="CHEBI:46858"/>
        <dbReference type="ChEBI" id="CHEBI:61978"/>
        <dbReference type="ChEBI" id="CHEBI:456216"/>
        <dbReference type="EC" id="2.7.12.2"/>
    </reaction>
</comment>
<comment type="activity regulation">
    <text>Phosphorylated at multiple sites in response to pheromone.</text>
</comment>
<comment type="interaction">
    <interactant intactId="EBI-18389">
        <id>P06784</id>
    </interactant>
    <interactant intactId="EBI-4192">
        <id>Q00684</id>
        <label>CDC14</label>
    </interactant>
    <organismsDiffer>false</organismsDiffer>
    <experiments>2</experiments>
</comment>
<comment type="interaction">
    <interactant intactId="EBI-18389">
        <id>P06784</id>
    </interactant>
    <interactant intactId="EBI-7193">
        <id>P16892</id>
        <label>FUS3</label>
    </interactant>
    <organismsDiffer>false</organismsDiffer>
    <experiments>15</experiments>
</comment>
<comment type="interaction">
    <interactant intactId="EBI-18389">
        <id>P06784</id>
    </interactant>
    <interactant intactId="EBI-8437">
        <id>P32485</id>
        <label>HOG1</label>
    </interactant>
    <organismsDiffer>false</organismsDiffer>
    <experiments>2</experiments>
</comment>
<comment type="interaction">
    <interactant intactId="EBI-18389">
        <id>P06784</id>
    </interactant>
    <interactant intactId="EBI-9945">
        <id>P14681</id>
        <label>KSS1</label>
    </interactant>
    <organismsDiffer>false</organismsDiffer>
    <experiments>17</experiments>
</comment>
<comment type="interaction">
    <interactant intactId="EBI-18389">
        <id>P06784</id>
    </interactant>
    <interactant intactId="EBI-18373">
        <id>P32917</id>
        <label>STE5</label>
    </interactant>
    <organismsDiffer>false</organismsDiffer>
    <experiments>9</experiments>
</comment>
<comment type="miscellaneous">
    <text evidence="3">Present with 672 molecules/cell in log phase SD medium.</text>
</comment>
<comment type="similarity">
    <text evidence="5">Belongs to the protein kinase superfamily. STE Ser/Thr protein kinase family. MAP kinase kinase subfamily.</text>
</comment>
<accession>P06784</accession>
<accession>D6VRJ2</accession>
<protein>
    <recommendedName>
        <fullName>Serine/threonine-protein kinase STE7</fullName>
        <ecNumber>2.7.12.2</ecNumber>
    </recommendedName>
</protein>
<reference key="1">
    <citation type="journal article" date="1986" name="Proc. Natl. Acad. Sci. U.S.A.">
        <title>Nucleotide sequence of the yeast regulatory gene STE7 predicts a protein homologous to protein kinases.</title>
        <authorList>
            <person name="Teague M.A."/>
            <person name="Chaleff D.T."/>
            <person name="Errede B."/>
        </authorList>
    </citation>
    <scope>NUCLEOTIDE SEQUENCE [GENOMIC DNA]</scope>
</reference>
<reference key="2">
    <citation type="journal article" date="1997" name="Nature">
        <title>The nucleotide sequence of Saccharomyces cerevisiae chromosome IV.</title>
        <authorList>
            <person name="Jacq C."/>
            <person name="Alt-Moerbe J."/>
            <person name="Andre B."/>
            <person name="Arnold W."/>
            <person name="Bahr A."/>
            <person name="Ballesta J.P.G."/>
            <person name="Bargues M."/>
            <person name="Baron L."/>
            <person name="Becker A."/>
            <person name="Biteau N."/>
            <person name="Bloecker H."/>
            <person name="Blugeon C."/>
            <person name="Boskovic J."/>
            <person name="Brandt P."/>
            <person name="Brueckner M."/>
            <person name="Buitrago M.J."/>
            <person name="Coster F."/>
            <person name="Delaveau T."/>
            <person name="del Rey F."/>
            <person name="Dujon B."/>
            <person name="Eide L.G."/>
            <person name="Garcia-Cantalejo J.M."/>
            <person name="Goffeau A."/>
            <person name="Gomez-Peris A."/>
            <person name="Granotier C."/>
            <person name="Hanemann V."/>
            <person name="Hankeln T."/>
            <person name="Hoheisel J.D."/>
            <person name="Jaeger W."/>
            <person name="Jimenez A."/>
            <person name="Jonniaux J.-L."/>
            <person name="Kraemer C."/>
            <person name="Kuester H."/>
            <person name="Laamanen P."/>
            <person name="Legros Y."/>
            <person name="Louis E.J."/>
            <person name="Moeller-Rieker S."/>
            <person name="Monnet A."/>
            <person name="Moro M."/>
            <person name="Mueller-Auer S."/>
            <person name="Nussbaumer B."/>
            <person name="Paricio N."/>
            <person name="Paulin L."/>
            <person name="Perea J."/>
            <person name="Perez-Alonso M."/>
            <person name="Perez-Ortin J.E."/>
            <person name="Pohl T.M."/>
            <person name="Prydz H."/>
            <person name="Purnelle B."/>
            <person name="Rasmussen S.W."/>
            <person name="Remacha M.A."/>
            <person name="Revuelta J.L."/>
            <person name="Rieger M."/>
            <person name="Salom D."/>
            <person name="Saluz H.P."/>
            <person name="Saiz J.E."/>
            <person name="Saren A.-M."/>
            <person name="Schaefer M."/>
            <person name="Scharfe M."/>
            <person name="Schmidt E.R."/>
            <person name="Schneider C."/>
            <person name="Scholler P."/>
            <person name="Schwarz S."/>
            <person name="Soler-Mira A."/>
            <person name="Urrestarazu L.A."/>
            <person name="Verhasselt P."/>
            <person name="Vissers S."/>
            <person name="Voet M."/>
            <person name="Volckaert G."/>
            <person name="Wagner G."/>
            <person name="Wambutt R."/>
            <person name="Wedler E."/>
            <person name="Wedler H."/>
            <person name="Woelfl S."/>
            <person name="Harris D.E."/>
            <person name="Bowman S."/>
            <person name="Brown D."/>
            <person name="Churcher C.M."/>
            <person name="Connor R."/>
            <person name="Dedman K."/>
            <person name="Gentles S."/>
            <person name="Hamlin N."/>
            <person name="Hunt S."/>
            <person name="Jones L."/>
            <person name="McDonald S."/>
            <person name="Murphy L.D."/>
            <person name="Niblett D."/>
            <person name="Odell C."/>
            <person name="Oliver K."/>
            <person name="Rajandream M.A."/>
            <person name="Richards C."/>
            <person name="Shore L."/>
            <person name="Walsh S.V."/>
            <person name="Barrell B.G."/>
            <person name="Dietrich F.S."/>
            <person name="Mulligan J.T."/>
            <person name="Allen E."/>
            <person name="Araujo R."/>
            <person name="Aviles E."/>
            <person name="Berno A."/>
            <person name="Carpenter J."/>
            <person name="Chen E."/>
            <person name="Cherry J.M."/>
            <person name="Chung E."/>
            <person name="Duncan M."/>
            <person name="Hunicke-Smith S."/>
            <person name="Hyman R.W."/>
            <person name="Komp C."/>
            <person name="Lashkari D."/>
            <person name="Lew H."/>
            <person name="Lin D."/>
            <person name="Mosedale D."/>
            <person name="Nakahara K."/>
            <person name="Namath A."/>
            <person name="Oefner P."/>
            <person name="Oh C."/>
            <person name="Petel F.X."/>
            <person name="Roberts D."/>
            <person name="Schramm S."/>
            <person name="Schroeder M."/>
            <person name="Shogren T."/>
            <person name="Shroff N."/>
            <person name="Winant A."/>
            <person name="Yelton M.A."/>
            <person name="Botstein D."/>
            <person name="Davis R.W."/>
            <person name="Johnston M."/>
            <person name="Andrews S."/>
            <person name="Brinkman R."/>
            <person name="Cooper J."/>
            <person name="Ding H."/>
            <person name="Du Z."/>
            <person name="Favello A."/>
            <person name="Fulton L."/>
            <person name="Gattung S."/>
            <person name="Greco T."/>
            <person name="Hallsworth K."/>
            <person name="Hawkins J."/>
            <person name="Hillier L.W."/>
            <person name="Jier M."/>
            <person name="Johnson D."/>
            <person name="Johnston L."/>
            <person name="Kirsten J."/>
            <person name="Kucaba T."/>
            <person name="Langston Y."/>
            <person name="Latreille P."/>
            <person name="Le T."/>
            <person name="Mardis E."/>
            <person name="Menezes S."/>
            <person name="Miller N."/>
            <person name="Nhan M."/>
            <person name="Pauley A."/>
            <person name="Peluso D."/>
            <person name="Rifkin L."/>
            <person name="Riles L."/>
            <person name="Taich A."/>
            <person name="Trevaskis E."/>
            <person name="Vignati D."/>
            <person name="Wilcox L."/>
            <person name="Wohldman P."/>
            <person name="Vaudin M."/>
            <person name="Wilson R."/>
            <person name="Waterston R."/>
            <person name="Albermann K."/>
            <person name="Hani J."/>
            <person name="Heumann K."/>
            <person name="Kleine K."/>
            <person name="Mewes H.-W."/>
            <person name="Zollner A."/>
            <person name="Zaccaria P."/>
        </authorList>
    </citation>
    <scope>NUCLEOTIDE SEQUENCE [LARGE SCALE GENOMIC DNA]</scope>
    <source>
        <strain>ATCC 204508 / S288c</strain>
    </source>
</reference>
<reference key="3">
    <citation type="journal article" date="2014" name="G3 (Bethesda)">
        <title>The reference genome sequence of Saccharomyces cerevisiae: Then and now.</title>
        <authorList>
            <person name="Engel S.R."/>
            <person name="Dietrich F.S."/>
            <person name="Fisk D.G."/>
            <person name="Binkley G."/>
            <person name="Balakrishnan R."/>
            <person name="Costanzo M.C."/>
            <person name="Dwight S.S."/>
            <person name="Hitz B.C."/>
            <person name="Karra K."/>
            <person name="Nash R.S."/>
            <person name="Weng S."/>
            <person name="Wong E.D."/>
            <person name="Lloyd P."/>
            <person name="Skrzypek M.S."/>
            <person name="Miyasato S.R."/>
            <person name="Simison M."/>
            <person name="Cherry J.M."/>
        </authorList>
    </citation>
    <scope>GENOME REANNOTATION</scope>
    <source>
        <strain>ATCC 204508 / S288c</strain>
    </source>
</reference>
<reference key="4">
    <citation type="journal article" date="1996" name="Yeast">
        <title>Analysis of a 23 kb region on the left arm of yeast chromosome IV.</title>
        <authorList>
            <person name="Delaveau T.T.D."/>
            <person name="Blugeon C."/>
            <person name="Jacq C."/>
            <person name="Perea J."/>
        </authorList>
    </citation>
    <scope>NUCLEOTIDE SEQUENCE [GENOMIC DNA] OF 70-515</scope>
    <source>
        <strain>ATCC 96604 / S288c / FY1679</strain>
    </source>
</reference>
<reference key="5">
    <citation type="journal article" date="1992" name="Genes Dev.">
        <title>Order of action of components in the yeast pheromone response pathway revealed with a dominant allele of the STE11 kinase and the multiple phosphorylation of the STE7 kinase.</title>
        <authorList>
            <person name="Cairns B.R."/>
            <person name="Ramer S.W."/>
            <person name="Kornberg K.D."/>
        </authorList>
    </citation>
    <scope>POSSIBLE FUNCTION</scope>
</reference>
<reference key="6">
    <citation type="journal article" date="1994" name="EMBO J.">
        <title>Activation of MEK family kinases requires phosphorylation of two conserved Ser/Thr residues.</title>
        <authorList>
            <person name="Zheng C.-F."/>
            <person name="Guan K.-L."/>
        </authorList>
    </citation>
    <scope>PHOSPHORYLATION AT SER-359 AND THR-363</scope>
    <scope>MUTAGENESIS</scope>
</reference>
<reference key="7">
    <citation type="journal article" date="2003" name="Nature">
        <title>Global analysis of protein expression in yeast.</title>
        <authorList>
            <person name="Ghaemmaghami S."/>
            <person name="Huh W.-K."/>
            <person name="Bower K."/>
            <person name="Howson R.W."/>
            <person name="Belle A."/>
            <person name="Dephoure N."/>
            <person name="O'Shea E.K."/>
            <person name="Weissman J.S."/>
        </authorList>
    </citation>
    <scope>LEVEL OF PROTEIN EXPRESSION [LARGE SCALE ANALYSIS]</scope>
</reference>
<organism>
    <name type="scientific">Saccharomyces cerevisiae (strain ATCC 204508 / S288c)</name>
    <name type="common">Baker's yeast</name>
    <dbReference type="NCBI Taxonomy" id="559292"/>
    <lineage>
        <taxon>Eukaryota</taxon>
        <taxon>Fungi</taxon>
        <taxon>Dikarya</taxon>
        <taxon>Ascomycota</taxon>
        <taxon>Saccharomycotina</taxon>
        <taxon>Saccharomycetes</taxon>
        <taxon>Saccharomycetales</taxon>
        <taxon>Saccharomycetaceae</taxon>
        <taxon>Saccharomyces</taxon>
    </lineage>
</organism>
<gene>
    <name type="primary">STE7</name>
    <name type="ordered locus">YDL159W</name>
    <name type="ORF">D1525</name>
</gene>
<evidence type="ECO:0000255" key="1">
    <source>
        <dbReference type="PROSITE-ProRule" id="PRU00159"/>
    </source>
</evidence>
<evidence type="ECO:0000255" key="2">
    <source>
        <dbReference type="PROSITE-ProRule" id="PRU10027"/>
    </source>
</evidence>
<evidence type="ECO:0000269" key="3">
    <source>
    </source>
</evidence>
<evidence type="ECO:0000269" key="4">
    <source>
    </source>
</evidence>
<evidence type="ECO:0000305" key="5"/>